<organism>
    <name type="scientific">Xanthomonas euvesicatoria pv. vesicatoria (strain 85-10)</name>
    <name type="common">Xanthomonas campestris pv. vesicatoria</name>
    <dbReference type="NCBI Taxonomy" id="316273"/>
    <lineage>
        <taxon>Bacteria</taxon>
        <taxon>Pseudomonadati</taxon>
        <taxon>Pseudomonadota</taxon>
        <taxon>Gammaproteobacteria</taxon>
        <taxon>Lysobacterales</taxon>
        <taxon>Lysobacteraceae</taxon>
        <taxon>Xanthomonas</taxon>
    </lineage>
</organism>
<protein>
    <recommendedName>
        <fullName evidence="1">Large ribosomal subunit protein uL3</fullName>
    </recommendedName>
    <alternativeName>
        <fullName evidence="2">50S ribosomal protein L3</fullName>
    </alternativeName>
</protein>
<reference key="1">
    <citation type="journal article" date="2005" name="J. Bacteriol.">
        <title>Insights into genome plasticity and pathogenicity of the plant pathogenic Bacterium Xanthomonas campestris pv. vesicatoria revealed by the complete genome sequence.</title>
        <authorList>
            <person name="Thieme F."/>
            <person name="Koebnik R."/>
            <person name="Bekel T."/>
            <person name="Berger C."/>
            <person name="Boch J."/>
            <person name="Buettner D."/>
            <person name="Caldana C."/>
            <person name="Gaigalat L."/>
            <person name="Goesmann A."/>
            <person name="Kay S."/>
            <person name="Kirchner O."/>
            <person name="Lanz C."/>
            <person name="Linke B."/>
            <person name="McHardy A.C."/>
            <person name="Meyer F."/>
            <person name="Mittenhuber G."/>
            <person name="Nies D.H."/>
            <person name="Niesbach-Kloesgen U."/>
            <person name="Patschkowski T."/>
            <person name="Rueckert C."/>
            <person name="Rupp O."/>
            <person name="Schneiker S."/>
            <person name="Schuster S.C."/>
            <person name="Vorhoelter F.J."/>
            <person name="Weber E."/>
            <person name="Puehler A."/>
            <person name="Bonas U."/>
            <person name="Bartels D."/>
            <person name="Kaiser O."/>
        </authorList>
    </citation>
    <scope>NUCLEOTIDE SEQUENCE [LARGE SCALE GENOMIC DNA]</scope>
    <source>
        <strain>85-10</strain>
    </source>
</reference>
<comment type="function">
    <text evidence="1">One of the primary rRNA binding proteins, it binds directly near the 3'-end of the 23S rRNA, where it nucleates assembly of the 50S subunit.</text>
</comment>
<comment type="subunit">
    <text evidence="1">Part of the 50S ribosomal subunit. Forms a cluster with proteins L14 and L19.</text>
</comment>
<comment type="PTM">
    <text evidence="1">Methylated by PrmB.</text>
</comment>
<comment type="similarity">
    <text evidence="1">Belongs to the universal ribosomal protein uL3 family.</text>
</comment>
<accession>Q3BWY3</accession>
<evidence type="ECO:0000255" key="1">
    <source>
        <dbReference type="HAMAP-Rule" id="MF_01325"/>
    </source>
</evidence>
<evidence type="ECO:0000305" key="2"/>
<keyword id="KW-0488">Methylation</keyword>
<keyword id="KW-0687">Ribonucleoprotein</keyword>
<keyword id="KW-0689">Ribosomal protein</keyword>
<keyword id="KW-0694">RNA-binding</keyword>
<keyword id="KW-0699">rRNA-binding</keyword>
<name>RL3_XANE5</name>
<proteinExistence type="inferred from homology"/>
<feature type="chain" id="PRO_0000241433" description="Large ribosomal subunit protein uL3">
    <location>
        <begin position="1"/>
        <end position="216"/>
    </location>
</feature>
<feature type="modified residue" description="N5-methylglutamine" evidence="1">
    <location>
        <position position="157"/>
    </location>
</feature>
<dbReference type="EMBL" id="AM039952">
    <property type="protein sequence ID" value="CAJ22630.1"/>
    <property type="molecule type" value="Genomic_DNA"/>
</dbReference>
<dbReference type="RefSeq" id="WP_005917121.1">
    <property type="nucleotide sequence ID" value="NZ_CP017190.1"/>
</dbReference>
<dbReference type="SMR" id="Q3BWY3"/>
<dbReference type="STRING" id="456327.BJD11_17740"/>
<dbReference type="GeneID" id="97509336"/>
<dbReference type="KEGG" id="xcv:XCV0999"/>
<dbReference type="eggNOG" id="COG0087">
    <property type="taxonomic scope" value="Bacteria"/>
</dbReference>
<dbReference type="HOGENOM" id="CLU_044142_4_1_6"/>
<dbReference type="Proteomes" id="UP000007069">
    <property type="component" value="Chromosome"/>
</dbReference>
<dbReference type="GO" id="GO:0022625">
    <property type="term" value="C:cytosolic large ribosomal subunit"/>
    <property type="evidence" value="ECO:0007669"/>
    <property type="project" value="TreeGrafter"/>
</dbReference>
<dbReference type="GO" id="GO:0019843">
    <property type="term" value="F:rRNA binding"/>
    <property type="evidence" value="ECO:0007669"/>
    <property type="project" value="UniProtKB-UniRule"/>
</dbReference>
<dbReference type="GO" id="GO:0003735">
    <property type="term" value="F:structural constituent of ribosome"/>
    <property type="evidence" value="ECO:0007669"/>
    <property type="project" value="InterPro"/>
</dbReference>
<dbReference type="GO" id="GO:0006412">
    <property type="term" value="P:translation"/>
    <property type="evidence" value="ECO:0007669"/>
    <property type="project" value="UniProtKB-UniRule"/>
</dbReference>
<dbReference type="FunFam" id="2.40.30.10:FF:000004">
    <property type="entry name" value="50S ribosomal protein L3"/>
    <property type="match status" value="1"/>
</dbReference>
<dbReference type="FunFam" id="3.30.160.810:FF:000001">
    <property type="entry name" value="50S ribosomal protein L3"/>
    <property type="match status" value="1"/>
</dbReference>
<dbReference type="Gene3D" id="3.30.160.810">
    <property type="match status" value="1"/>
</dbReference>
<dbReference type="Gene3D" id="2.40.30.10">
    <property type="entry name" value="Translation factors"/>
    <property type="match status" value="1"/>
</dbReference>
<dbReference type="HAMAP" id="MF_01325_B">
    <property type="entry name" value="Ribosomal_uL3_B"/>
    <property type="match status" value="1"/>
</dbReference>
<dbReference type="InterPro" id="IPR000597">
    <property type="entry name" value="Ribosomal_uL3"/>
</dbReference>
<dbReference type="InterPro" id="IPR019927">
    <property type="entry name" value="Ribosomal_uL3_bac/org-type"/>
</dbReference>
<dbReference type="InterPro" id="IPR019926">
    <property type="entry name" value="Ribosomal_uL3_CS"/>
</dbReference>
<dbReference type="InterPro" id="IPR009000">
    <property type="entry name" value="Transl_B-barrel_sf"/>
</dbReference>
<dbReference type="NCBIfam" id="TIGR03625">
    <property type="entry name" value="L3_bact"/>
    <property type="match status" value="1"/>
</dbReference>
<dbReference type="PANTHER" id="PTHR11229">
    <property type="entry name" value="50S RIBOSOMAL PROTEIN L3"/>
    <property type="match status" value="1"/>
</dbReference>
<dbReference type="PANTHER" id="PTHR11229:SF16">
    <property type="entry name" value="LARGE RIBOSOMAL SUBUNIT PROTEIN UL3C"/>
    <property type="match status" value="1"/>
</dbReference>
<dbReference type="Pfam" id="PF00297">
    <property type="entry name" value="Ribosomal_L3"/>
    <property type="match status" value="1"/>
</dbReference>
<dbReference type="SUPFAM" id="SSF50447">
    <property type="entry name" value="Translation proteins"/>
    <property type="match status" value="1"/>
</dbReference>
<dbReference type="PROSITE" id="PS00474">
    <property type="entry name" value="RIBOSOMAL_L3"/>
    <property type="match status" value="1"/>
</dbReference>
<sequence>MTKKYSLGFVGRKAGMSRVFTEDGRSVPVTLIEATPNRIAQIKTVEVDGYSAVQVTVGARRAALVNKPAAGHFAKAKVEAGRGLWEFRVEDAQLGDFAVGGEIKADIFEVGQKVDVQGVTKGKGFQGTIKRYNFRMGDATHGNSLSHRAPGSLGQRQTPGRVFPGKKMSGHMGAVQQSTQNLEVVKVDVERGLIAIRGAVPGAAGGDVIVRPASKA</sequence>
<gene>
    <name evidence="1" type="primary">rplC</name>
    <name type="ordered locus">XCV0999</name>
</gene>